<sequence>YVGQRLCGSQLVDTLYSVCKHRGFYRPSEGIVDQCCTNICSRNQLLTYCN</sequence>
<evidence type="ECO:0000305" key="1"/>
<proteinExistence type="evidence at protein level"/>
<name>INS_PROGU</name>
<accession>P01331</accession>
<keyword id="KW-0119">Carbohydrate metabolism</keyword>
<keyword id="KW-0903">Direct protein sequencing</keyword>
<keyword id="KW-1015">Disulfide bond</keyword>
<keyword id="KW-0313">Glucose metabolism</keyword>
<keyword id="KW-0372">Hormone</keyword>
<keyword id="KW-0964">Secreted</keyword>
<reference key="1">
    <citation type="journal article" date="1979" name="Nature">
        <title>Evolutionary change in the insulin receptors of hystricomorph rodents.</title>
        <authorList>
            <person name="Horuk R."/>
            <person name="Goodwin P."/>
            <person name="O'Connor K."/>
            <person name="Neville R.W.J."/>
            <person name="Lazarus N.R."/>
            <person name="Stone D."/>
        </authorList>
    </citation>
    <scope>PROTEIN SEQUENCE</scope>
</reference>
<dbReference type="PIR" id="A01597">
    <property type="entry name" value="INKS"/>
</dbReference>
<dbReference type="SMR" id="P01331"/>
<dbReference type="GO" id="GO:0005576">
    <property type="term" value="C:extracellular region"/>
    <property type="evidence" value="ECO:0007669"/>
    <property type="project" value="UniProtKB-SubCell"/>
</dbReference>
<dbReference type="GO" id="GO:0005179">
    <property type="term" value="F:hormone activity"/>
    <property type="evidence" value="ECO:0007669"/>
    <property type="project" value="UniProtKB-KW"/>
</dbReference>
<dbReference type="GO" id="GO:0006006">
    <property type="term" value="P:glucose metabolic process"/>
    <property type="evidence" value="ECO:0007669"/>
    <property type="project" value="UniProtKB-KW"/>
</dbReference>
<dbReference type="Gene3D" id="1.10.100.10">
    <property type="entry name" value="Insulin-like"/>
    <property type="match status" value="1"/>
</dbReference>
<dbReference type="InterPro" id="IPR016179">
    <property type="entry name" value="Insulin-like"/>
</dbReference>
<dbReference type="InterPro" id="IPR036438">
    <property type="entry name" value="Insulin-like_sf"/>
</dbReference>
<dbReference type="InterPro" id="IPR022353">
    <property type="entry name" value="Insulin_CS"/>
</dbReference>
<dbReference type="InterPro" id="IPR022352">
    <property type="entry name" value="Insulin_family"/>
</dbReference>
<dbReference type="Pfam" id="PF00049">
    <property type="entry name" value="Insulin"/>
    <property type="match status" value="1"/>
</dbReference>
<dbReference type="PRINTS" id="PR00276">
    <property type="entry name" value="INSULINFAMLY"/>
</dbReference>
<dbReference type="SMART" id="SM00078">
    <property type="entry name" value="IlGF"/>
    <property type="match status" value="1"/>
</dbReference>
<dbReference type="SUPFAM" id="SSF56994">
    <property type="entry name" value="Insulin-like"/>
    <property type="match status" value="1"/>
</dbReference>
<dbReference type="PROSITE" id="PS00262">
    <property type="entry name" value="INSULIN"/>
    <property type="match status" value="1"/>
</dbReference>
<feature type="peptide" id="PRO_0000015887" description="Insulin B chain">
    <location>
        <begin position="1"/>
        <end position="29"/>
    </location>
</feature>
<feature type="peptide" id="PRO_0000015888" description="Insulin A chain">
    <location>
        <begin position="30"/>
        <end position="50"/>
    </location>
</feature>
<feature type="disulfide bond" description="Interchain (between B and A chains)">
    <location>
        <begin position="7"/>
        <end position="36"/>
    </location>
</feature>
<feature type="disulfide bond" description="Interchain (between B and A chains)">
    <location>
        <begin position="19"/>
        <end position="49"/>
    </location>
</feature>
<feature type="disulfide bond">
    <location>
        <begin position="35"/>
        <end position="40"/>
    </location>
</feature>
<feature type="non-consecutive residues" evidence="1">
    <location>
        <begin position="29"/>
        <end position="30"/>
    </location>
</feature>
<comment type="function">
    <text>Insulin decreases blood glucose concentration. It increases cell permeability to monosaccharides, amino acids and fatty acids. It accelerates glycolysis, the pentose phosphate cycle, and glycogen synthesis in liver.</text>
</comment>
<comment type="subunit">
    <text>Heterodimer of a B chain and an A chain linked by two disulfide bonds.</text>
</comment>
<comment type="subcellular location">
    <subcellularLocation>
        <location>Secreted</location>
    </subcellularLocation>
</comment>
<comment type="similarity">
    <text evidence="1">Belongs to the insulin family.</text>
</comment>
<protein>
    <recommendedName>
        <fullName>Insulin</fullName>
    </recommendedName>
    <component>
        <recommendedName>
            <fullName>Insulin B chain</fullName>
        </recommendedName>
    </component>
    <component>
        <recommendedName>
            <fullName>Insulin A chain</fullName>
        </recommendedName>
    </component>
</protein>
<organism>
    <name type="scientific">Proechimys guairae</name>
    <name type="common">Guaira spiny rat</name>
    <dbReference type="NCBI Taxonomy" id="10163"/>
    <lineage>
        <taxon>Eukaryota</taxon>
        <taxon>Metazoa</taxon>
        <taxon>Chordata</taxon>
        <taxon>Craniata</taxon>
        <taxon>Vertebrata</taxon>
        <taxon>Euteleostomi</taxon>
        <taxon>Mammalia</taxon>
        <taxon>Eutheria</taxon>
        <taxon>Euarchontoglires</taxon>
        <taxon>Glires</taxon>
        <taxon>Rodentia</taxon>
        <taxon>Hystricomorpha</taxon>
        <taxon>Echimyidae</taxon>
        <taxon>Proechimys</taxon>
    </lineage>
</organism>
<gene>
    <name type="primary">INS</name>
</gene>